<feature type="chain" id="PRO_0000447555" description="Protein EXPRESSION OF TERPENOIDS 1">
    <location>
        <begin position="1"/>
        <end position="351"/>
    </location>
</feature>
<feature type="DNA-binding region" description="Zn(2)-C6 fungal-type; degenerate" evidence="6">
    <location>
        <begin position="129"/>
        <end position="156"/>
    </location>
</feature>
<feature type="region of interest" description="Disordered" evidence="2">
    <location>
        <begin position="1"/>
        <end position="23"/>
    </location>
</feature>
<feature type="region of interest" description="Disordered" evidence="2">
    <location>
        <begin position="170"/>
        <end position="219"/>
    </location>
</feature>
<feature type="region of interest" description="Disordered" evidence="2">
    <location>
        <begin position="286"/>
        <end position="320"/>
    </location>
</feature>
<feature type="short sequence motif" description="Required for homo- and heterodimerization" evidence="1">
    <location>
        <begin position="258"/>
        <end position="261"/>
    </location>
</feature>
<feature type="compositionally biased region" description="Low complexity" evidence="2">
    <location>
        <begin position="11"/>
        <end position="22"/>
    </location>
</feature>
<feature type="compositionally biased region" description="Low complexity" evidence="2">
    <location>
        <begin position="175"/>
        <end position="193"/>
    </location>
</feature>
<feature type="compositionally biased region" description="Polar residues" evidence="2">
    <location>
        <begin position="204"/>
        <end position="219"/>
    </location>
</feature>
<feature type="compositionally biased region" description="Low complexity" evidence="2">
    <location>
        <begin position="303"/>
        <end position="320"/>
    </location>
</feature>
<feature type="binding site" evidence="6">
    <location>
        <position position="129"/>
    </location>
    <ligand>
        <name>Zn(2+)</name>
        <dbReference type="ChEBI" id="CHEBI:29105"/>
        <label>1</label>
    </ligand>
</feature>
<feature type="binding site" evidence="6">
    <location>
        <position position="129"/>
    </location>
    <ligand>
        <name>Zn(2+)</name>
        <dbReference type="ChEBI" id="CHEBI:29105"/>
        <label>2</label>
    </ligand>
</feature>
<feature type="binding site" evidence="6">
    <location>
        <position position="132"/>
    </location>
    <ligand>
        <name>Zn(2+)</name>
        <dbReference type="ChEBI" id="CHEBI:29105"/>
        <label>1</label>
    </ligand>
</feature>
<feature type="binding site" evidence="6">
    <location>
        <position position="140"/>
    </location>
    <ligand>
        <name>Zn(2+)</name>
        <dbReference type="ChEBI" id="CHEBI:29105"/>
        <label>1</label>
    </ligand>
</feature>
<feature type="binding site" evidence="6">
    <location>
        <position position="145"/>
    </location>
    <ligand>
        <name>Zn(2+)</name>
        <dbReference type="ChEBI" id="CHEBI:29105"/>
        <label>1</label>
    </ligand>
</feature>
<feature type="binding site" evidence="6">
    <location>
        <position position="145"/>
    </location>
    <ligand>
        <name>Zn(2+)</name>
        <dbReference type="ChEBI" id="CHEBI:29105"/>
        <label>2</label>
    </ligand>
</feature>
<feature type="binding site" evidence="6">
    <location>
        <position position="149"/>
    </location>
    <ligand>
        <name>Zn(2+)</name>
        <dbReference type="ChEBI" id="CHEBI:29105"/>
        <label>2</label>
    </ligand>
</feature>
<feature type="binding site" evidence="6">
    <location>
        <position position="156"/>
    </location>
    <ligand>
        <name>Zn(2+)</name>
        <dbReference type="ChEBI" id="CHEBI:29105"/>
        <label>2</label>
    </ligand>
</feature>
<proteinExistence type="evidence at transcript level"/>
<comment type="function">
    <text evidence="3 4">Transcription activator involved in the transcriptional regulation of terpene biosynthesis in glandular trichomes (PubMed:24142382, PubMed:24884371). Binds to the promoter of the linalool synthase TPS5 and promotes TPS5 gene transactivation (PubMed:24142382, PubMed:24884371). Acts synergistically with MYC1 in the transactivation of TPS5 (PubMed:24884371).</text>
</comment>
<comment type="subunit">
    <text evidence="1">Forms homodimers and heterodimers with LRP1.</text>
</comment>
<comment type="subcellular location">
    <subcellularLocation>
        <location evidence="3">Nucleus</location>
    </subcellularLocation>
</comment>
<comment type="similarity">
    <text evidence="6">Belongs to the SHI protein family.</text>
</comment>
<evidence type="ECO:0000250" key="1">
    <source>
        <dbReference type="UniProtKB" id="Q9SD40"/>
    </source>
</evidence>
<evidence type="ECO:0000256" key="2">
    <source>
        <dbReference type="SAM" id="MobiDB-lite"/>
    </source>
</evidence>
<evidence type="ECO:0000269" key="3">
    <source>
    </source>
</evidence>
<evidence type="ECO:0000269" key="4">
    <source>
    </source>
</evidence>
<evidence type="ECO:0000303" key="5">
    <source>
    </source>
</evidence>
<evidence type="ECO:0000305" key="6"/>
<keyword id="KW-0010">Activator</keyword>
<keyword id="KW-0238">DNA-binding</keyword>
<keyword id="KW-0479">Metal-binding</keyword>
<keyword id="KW-0539">Nucleus</keyword>
<keyword id="KW-1185">Reference proteome</keyword>
<keyword id="KW-0804">Transcription</keyword>
<keyword id="KW-0805">Transcription regulation</keyword>
<keyword id="KW-0862">Zinc</keyword>
<reference key="1">
    <citation type="journal article" date="2014" name="Plant Mol. Biol.">
        <title>Expression of Terpenoids 1, a glandular trichome-specific transcription factor from tomato that activates the terpene synthase 5 promoter.</title>
        <authorList>
            <person name="Spyropoulou E.A."/>
            <person name="Haring M.A."/>
            <person name="Schuurink R.C."/>
        </authorList>
    </citation>
    <scope>NUCLEOTIDE SEQUENCE [MRNA]</scope>
    <scope>FUNCTION</scope>
    <scope>SUBCELLULAR LOCATION</scope>
</reference>
<reference key="2">
    <citation type="journal article" date="2012" name="Nature">
        <title>The tomato genome sequence provides insights into fleshy fruit evolution.</title>
        <authorList>
            <consortium name="Tomato Genome Consortium"/>
        </authorList>
    </citation>
    <scope>NUCLEOTIDE SEQUENCE [LARGE SCALE GENOMIC DNA]</scope>
    <source>
        <strain>cv. Heinz 1706</strain>
    </source>
</reference>
<reference key="3">
    <citation type="journal article" date="2014" name="BMC Genomics">
        <title>RNA sequencing on Solanum lycopersicum trichomes identifies transcription factors that activate terpene synthase promoters.</title>
        <authorList>
            <person name="Spyropoulou E.A."/>
            <person name="Haring M.A."/>
            <person name="Schuurink R.C."/>
        </authorList>
    </citation>
    <scope>FUNCTION</scope>
</reference>
<protein>
    <recommendedName>
        <fullName evidence="5">Protein EXPRESSION OF TERPENOIDS 1</fullName>
        <shortName evidence="5">SlEOT1</shortName>
    </recommendedName>
</protein>
<sequence length="351" mass="38501">MANFFSLGGNQEQQHQEISSSQALVPTESNNWFLYRNEHHHHHHNQEIPNTYKGFELWQSGNTPQHQHQHHQQQQQFRHPIYPLQDLYSTDVGLGVGPSRSGFDISAGDHEASRSGFVMMRSGGGGISCQDCGNQAKKDCQHMRCRTCCKSRGFQCQTHVKSTWVPAAKRRERQQQLAALQQQQQGHNNNNNNHKNKRQREDPSASSLVSTRLPSNTNGLEVGKFPSKVRTSAVFQCIQMSSIEDDEDQLAYQAAVSIGGHVFKGILYDQGHESQYNNMVAAGGDTSSGGSAGGVQHHHHNSAAVATATTTSGGDATAAGPSNFLDPSLFPAPLSTFMVAGTQFFPPSRSP</sequence>
<name>EOT1_SOLLC</name>
<accession>K4B6C9</accession>
<dbReference type="EMBL" id="KC331910">
    <property type="protein sequence ID" value="AGW27396.1"/>
    <property type="molecule type" value="mRNA"/>
</dbReference>
<dbReference type="EMBL" id="CM001065">
    <property type="status" value="NOT_ANNOTATED_CDS"/>
    <property type="molecule type" value="Genomic_DNA"/>
</dbReference>
<dbReference type="RefSeq" id="NP_001274697.1">
    <property type="nucleotide sequence ID" value="NM_001287768.1"/>
</dbReference>
<dbReference type="FunCoup" id="K4B6C9">
    <property type="interactions" value="340"/>
</dbReference>
<dbReference type="STRING" id="4081.K4B6C9"/>
<dbReference type="PaxDb" id="4081-Solyc02g062400.2.1"/>
<dbReference type="EnsemblPlants" id="Solyc02g062400.3.1">
    <property type="protein sequence ID" value="Solyc02g062400.3.1"/>
    <property type="gene ID" value="Solyc02g062400.3"/>
</dbReference>
<dbReference type="GeneID" id="101251254"/>
<dbReference type="Gramene" id="Solyc02g062400.3.1">
    <property type="protein sequence ID" value="Solyc02g062400.3.1"/>
    <property type="gene ID" value="Solyc02g062400.3"/>
</dbReference>
<dbReference type="KEGG" id="sly:101251254"/>
<dbReference type="eggNOG" id="ENOG502QQ15">
    <property type="taxonomic scope" value="Eukaryota"/>
</dbReference>
<dbReference type="HOGENOM" id="CLU_041493_1_0_1"/>
<dbReference type="InParanoid" id="K4B6C9"/>
<dbReference type="OMA" id="VFQCIQM"/>
<dbReference type="OrthoDB" id="692274at2759"/>
<dbReference type="PhylomeDB" id="K4B6C9"/>
<dbReference type="Proteomes" id="UP000004994">
    <property type="component" value="Chromosome 2"/>
</dbReference>
<dbReference type="GO" id="GO:0005634">
    <property type="term" value="C:nucleus"/>
    <property type="evidence" value="ECO:0000318"/>
    <property type="project" value="GO_Central"/>
</dbReference>
<dbReference type="GO" id="GO:0003677">
    <property type="term" value="F:DNA binding"/>
    <property type="evidence" value="ECO:0000318"/>
    <property type="project" value="GO_Central"/>
</dbReference>
<dbReference type="GO" id="GO:0003700">
    <property type="term" value="F:DNA-binding transcription factor activity"/>
    <property type="evidence" value="ECO:0007669"/>
    <property type="project" value="InterPro"/>
</dbReference>
<dbReference type="GO" id="GO:0046872">
    <property type="term" value="F:metal ion binding"/>
    <property type="evidence" value="ECO:0007669"/>
    <property type="project" value="UniProtKB-KW"/>
</dbReference>
<dbReference type="GO" id="GO:0045893">
    <property type="term" value="P:positive regulation of DNA-templated transcription"/>
    <property type="evidence" value="ECO:0000318"/>
    <property type="project" value="GO_Central"/>
</dbReference>
<dbReference type="InterPro" id="IPR007818">
    <property type="entry name" value="SHI"/>
</dbReference>
<dbReference type="InterPro" id="IPR006511">
    <property type="entry name" value="SHI_C"/>
</dbReference>
<dbReference type="InterPro" id="IPR006510">
    <property type="entry name" value="Znf_LRP1"/>
</dbReference>
<dbReference type="NCBIfam" id="TIGR01624">
    <property type="entry name" value="LRP1_Cterm"/>
    <property type="match status" value="1"/>
</dbReference>
<dbReference type="NCBIfam" id="TIGR01623">
    <property type="entry name" value="put_zinc_LRP1"/>
    <property type="match status" value="1"/>
</dbReference>
<dbReference type="PANTHER" id="PTHR31604:SF18">
    <property type="entry name" value="PROTEIN EXPRESSION OF TERPENOIDS 1"/>
    <property type="match status" value="1"/>
</dbReference>
<dbReference type="PANTHER" id="PTHR31604">
    <property type="entry name" value="PROTEIN LATERAL ROOT PRIMORDIUM 1"/>
    <property type="match status" value="1"/>
</dbReference>
<dbReference type="Pfam" id="PF05142">
    <property type="entry name" value="DUF702"/>
    <property type="match status" value="1"/>
</dbReference>
<gene>
    <name evidence="5" type="primary">EOT1</name>
    <name evidence="6" type="ordered locus">Solyc02g062400</name>
</gene>
<organism>
    <name type="scientific">Solanum lycopersicum</name>
    <name type="common">Tomato</name>
    <name type="synonym">Lycopersicon esculentum</name>
    <dbReference type="NCBI Taxonomy" id="4081"/>
    <lineage>
        <taxon>Eukaryota</taxon>
        <taxon>Viridiplantae</taxon>
        <taxon>Streptophyta</taxon>
        <taxon>Embryophyta</taxon>
        <taxon>Tracheophyta</taxon>
        <taxon>Spermatophyta</taxon>
        <taxon>Magnoliopsida</taxon>
        <taxon>eudicotyledons</taxon>
        <taxon>Gunneridae</taxon>
        <taxon>Pentapetalae</taxon>
        <taxon>asterids</taxon>
        <taxon>lamiids</taxon>
        <taxon>Solanales</taxon>
        <taxon>Solanaceae</taxon>
        <taxon>Solanoideae</taxon>
        <taxon>Solaneae</taxon>
        <taxon>Solanum</taxon>
        <taxon>Solanum subgen. Lycopersicon</taxon>
    </lineage>
</organism>